<comment type="function">
    <text evidence="1 3">Required for the development and maturation of T-cells, its function being essential for the late stages of thymocyte development (By similarity). Plays a role in T-cell antigen receptor (TCR)-mediated activation of the ERK and NFAT signaling pathways, possibly by serving as a scaffolding protein that promotes the assembly of the LAT signalosome in thymocytes. May play a role in the regulation of inositol 1,4,5-trisphosphate receptor-mediated Ca(2+) release and mitochondrial Ca(2+) uptake via the mitochondria-associated endoplasmic reticulum membrane (MAM) compartment.</text>
</comment>
<comment type="subunit">
    <text evidence="1 3 4 5">Interacts with PLCG1 and GRB2; the association is increased with prolonged stimulation of the TCR and may facilitate the assembly of the LAT signalosome. Interacts with ITPR1. Also interacts with ITPR3 (By similarity). Interacts with HSPA9.</text>
</comment>
<comment type="subcellular location">
    <subcellularLocation>
        <location evidence="3 4">Cytoplasm</location>
    </subcellularLocation>
    <subcellularLocation>
        <location evidence="4">Endoplasmic reticulum membrane</location>
    </subcellularLocation>
    <text evidence="4">May localize to mitochondria-associated endoplasmic reticulum membrane (MAM).</text>
</comment>
<comment type="alternative products">
    <event type="alternative splicing"/>
    <isoform>
        <id>A2RU30-1</id>
        <name>1</name>
        <sequence type="displayed"/>
    </isoform>
    <isoform>
        <id>A2RU30-2</id>
        <name>2</name>
        <sequence type="described" ref="VSP_030488"/>
    </isoform>
    <isoform>
        <id>A2RU30-3</id>
        <name>3</name>
        <sequence type="described" ref="VSP_030488 VSP_030489"/>
    </isoform>
</comment>
<comment type="PTM">
    <text evidence="1">May be phosphorylated in response to store-operated Ca(+2) entry.</text>
</comment>
<comment type="sequence caution" evidence="10">
    <conflict type="frameshift">
        <sequence resource="EMBL-CDS" id="AAF28935"/>
    </conflict>
</comment>
<dbReference type="EMBL" id="AB018291">
    <property type="protein sequence ID" value="BAA34468.2"/>
    <property type="molecule type" value="mRNA"/>
</dbReference>
<dbReference type="EMBL" id="AK298405">
    <property type="protein sequence ID" value="BAG60635.1"/>
    <property type="molecule type" value="mRNA"/>
</dbReference>
<dbReference type="EMBL" id="AK303223">
    <property type="protein sequence ID" value="BAG64310.1"/>
    <property type="molecule type" value="mRNA"/>
</dbReference>
<dbReference type="EMBL" id="AK315972">
    <property type="protein sequence ID" value="BAH14343.1"/>
    <property type="molecule type" value="mRNA"/>
</dbReference>
<dbReference type="EMBL" id="AC079842">
    <property type="status" value="NOT_ANNOTATED_CDS"/>
    <property type="molecule type" value="Genomic_DNA"/>
</dbReference>
<dbReference type="EMBL" id="CH471054">
    <property type="protein sequence ID" value="EAW96796.1"/>
    <property type="molecule type" value="Genomic_DNA"/>
</dbReference>
<dbReference type="EMBL" id="CH471054">
    <property type="protein sequence ID" value="EAW96799.1"/>
    <property type="molecule type" value="Genomic_DNA"/>
</dbReference>
<dbReference type="EMBL" id="BC044578">
    <property type="protein sequence ID" value="AAH44578.1"/>
    <property type="molecule type" value="mRNA"/>
</dbReference>
<dbReference type="EMBL" id="BC132732">
    <property type="protein sequence ID" value="AAI32733.2"/>
    <property type="molecule type" value="mRNA"/>
</dbReference>
<dbReference type="EMBL" id="BC132734">
    <property type="protein sequence ID" value="AAI32735.2"/>
    <property type="molecule type" value="mRNA"/>
</dbReference>
<dbReference type="EMBL" id="AF161375">
    <property type="protein sequence ID" value="AAF28935.1"/>
    <property type="status" value="ALT_FRAME"/>
    <property type="molecule type" value="mRNA"/>
</dbReference>
<dbReference type="CCDS" id="CCDS44913.1">
    <molecule id="A2RU30-1"/>
</dbReference>
<dbReference type="CCDS" id="CCDS58240.1">
    <molecule id="A2RU30-2"/>
</dbReference>
<dbReference type="RefSeq" id="NP_001092285.1">
    <molecule id="A2RU30-1"/>
    <property type="nucleotide sequence ID" value="NM_001098815.3"/>
</dbReference>
<dbReference type="RefSeq" id="NP_001129502.1">
    <molecule id="A2RU30-1"/>
    <property type="nucleotide sequence ID" value="NM_001136030.3"/>
</dbReference>
<dbReference type="RefSeq" id="NP_001248773.1">
    <molecule id="A2RU30-2"/>
    <property type="nucleotide sequence ID" value="NM_001261844.1"/>
</dbReference>
<dbReference type="RefSeq" id="NP_001338077.1">
    <molecule id="A2RU30-2"/>
    <property type="nucleotide sequence ID" value="NM_001351148.1"/>
</dbReference>
<dbReference type="RefSeq" id="NP_001338078.1">
    <molecule id="A2RU30-1"/>
    <property type="nucleotide sequence ID" value="NM_001351149.2"/>
</dbReference>
<dbReference type="RefSeq" id="NP_055611.1">
    <molecule id="A2RU30-2"/>
    <property type="nucleotide sequence ID" value="NM_014796.2"/>
</dbReference>
<dbReference type="RefSeq" id="XP_005269304.1">
    <property type="nucleotide sequence ID" value="XM_005269247.2"/>
</dbReference>
<dbReference type="RefSeq" id="XP_006719778.1">
    <molecule id="A2RU30-1"/>
    <property type="nucleotide sequence ID" value="XM_006719715.4"/>
</dbReference>
<dbReference type="RefSeq" id="XP_011537337.1">
    <molecule id="A2RU30-1"/>
    <property type="nucleotide sequence ID" value="XM_011539035.3"/>
</dbReference>
<dbReference type="RefSeq" id="XP_011537338.1">
    <property type="nucleotide sequence ID" value="XM_011539036.1"/>
</dbReference>
<dbReference type="RefSeq" id="XP_011537339.1">
    <molecule id="A2RU30-1"/>
    <property type="nucleotide sequence ID" value="XM_011539037.4"/>
</dbReference>
<dbReference type="RefSeq" id="XP_016875751.1">
    <molecule id="A2RU30-1"/>
    <property type="nucleotide sequence ID" value="XM_017020262.2"/>
</dbReference>
<dbReference type="RefSeq" id="XP_016875752.1">
    <molecule id="A2RU30-1"/>
    <property type="nucleotide sequence ID" value="XM_017020263.2"/>
</dbReference>
<dbReference type="RefSeq" id="XP_047285885.1">
    <molecule id="A2RU30-1"/>
    <property type="nucleotide sequence ID" value="XM_047429929.1"/>
</dbReference>
<dbReference type="RefSeq" id="XP_047285886.1">
    <molecule id="A2RU30-1"/>
    <property type="nucleotide sequence ID" value="XM_047429930.1"/>
</dbReference>
<dbReference type="RefSeq" id="XP_047285887.1">
    <molecule id="A2RU30-1"/>
    <property type="nucleotide sequence ID" value="XM_047429931.1"/>
</dbReference>
<dbReference type="RefSeq" id="XP_054229898.1">
    <molecule id="A2RU30-1"/>
    <property type="nucleotide sequence ID" value="XM_054373923.1"/>
</dbReference>
<dbReference type="RefSeq" id="XP_054229899.1">
    <molecule id="A2RU30-1"/>
    <property type="nucleotide sequence ID" value="XM_054373924.1"/>
</dbReference>
<dbReference type="RefSeq" id="XP_054229900.1">
    <molecule id="A2RU30-1"/>
    <property type="nucleotide sequence ID" value="XM_054373925.1"/>
</dbReference>
<dbReference type="RefSeq" id="XP_054229901.1">
    <molecule id="A2RU30-1"/>
    <property type="nucleotide sequence ID" value="XM_054373926.1"/>
</dbReference>
<dbReference type="RefSeq" id="XP_054229902.1">
    <molecule id="A2RU30-1"/>
    <property type="nucleotide sequence ID" value="XM_054373927.1"/>
</dbReference>
<dbReference type="RefSeq" id="XP_054229903.1">
    <molecule id="A2RU30-1"/>
    <property type="nucleotide sequence ID" value="XM_054373928.1"/>
</dbReference>
<dbReference type="RefSeq" id="XP_054229904.1">
    <molecule id="A2RU30-1"/>
    <property type="nucleotide sequence ID" value="XM_054373929.1"/>
</dbReference>
<dbReference type="RefSeq" id="XP_054229905.1">
    <molecule id="A2RU30-1"/>
    <property type="nucleotide sequence ID" value="XM_054373930.1"/>
</dbReference>
<dbReference type="BioGRID" id="115176">
    <property type="interactions" value="15"/>
</dbReference>
<dbReference type="FunCoup" id="A2RU30">
    <property type="interactions" value="377"/>
</dbReference>
<dbReference type="IntAct" id="A2RU30">
    <property type="interactions" value="16"/>
</dbReference>
<dbReference type="STRING" id="9606.ENSP00000400892"/>
<dbReference type="iPTMnet" id="A2RU30"/>
<dbReference type="PhosphoSitePlus" id="A2RU30"/>
<dbReference type="BioMuta" id="TESPA1"/>
<dbReference type="MassIVE" id="A2RU30"/>
<dbReference type="PaxDb" id="9606-ENSP00000400892"/>
<dbReference type="PeptideAtlas" id="A2RU30"/>
<dbReference type="ProteomicsDB" id="492">
    <molecule id="A2RU30-1"/>
</dbReference>
<dbReference type="ProteomicsDB" id="493">
    <molecule id="A2RU30-2"/>
</dbReference>
<dbReference type="ProteomicsDB" id="494">
    <molecule id="A2RU30-3"/>
</dbReference>
<dbReference type="Antibodypedia" id="48438">
    <property type="antibodies" value="73 antibodies from 24 providers"/>
</dbReference>
<dbReference type="DNASU" id="9840"/>
<dbReference type="Ensembl" id="ENST00000316577.12">
    <molecule id="A2RU30-1"/>
    <property type="protein sequence ID" value="ENSP00000312679.8"/>
    <property type="gene ID" value="ENSG00000135426.16"/>
</dbReference>
<dbReference type="Ensembl" id="ENST00000449076.6">
    <molecule id="A2RU30-1"/>
    <property type="protein sequence ID" value="ENSP00000400892.1"/>
    <property type="gene ID" value="ENSG00000135426.16"/>
</dbReference>
<dbReference type="Ensembl" id="ENST00000524622.5">
    <molecule id="A2RU30-2"/>
    <property type="protein sequence ID" value="ENSP00000435622.1"/>
    <property type="gene ID" value="ENSG00000135426.16"/>
</dbReference>
<dbReference type="Ensembl" id="ENST00000531122.5">
    <molecule id="A2RU30-2"/>
    <property type="protein sequence ID" value="ENSP00000433098.1"/>
    <property type="gene ID" value="ENSG00000135426.16"/>
</dbReference>
<dbReference type="Ensembl" id="ENST00000532804.5">
    <molecule id="A2RU30-2"/>
    <property type="protein sequence ID" value="ENSP00000432030.1"/>
    <property type="gene ID" value="ENSG00000135426.16"/>
</dbReference>
<dbReference type="GeneID" id="9840"/>
<dbReference type="KEGG" id="hsa:9840"/>
<dbReference type="MANE-Select" id="ENST00000449076.6">
    <property type="protein sequence ID" value="ENSP00000400892.1"/>
    <property type="RefSeq nucleotide sequence ID" value="NM_001136030.3"/>
    <property type="RefSeq protein sequence ID" value="NP_001129502.1"/>
</dbReference>
<dbReference type="UCSC" id="uc001sgl.5">
    <molecule id="A2RU30-1"/>
    <property type="organism name" value="human"/>
</dbReference>
<dbReference type="AGR" id="HGNC:29109"/>
<dbReference type="CTD" id="9840"/>
<dbReference type="DisGeNET" id="9840"/>
<dbReference type="GeneCards" id="TESPA1"/>
<dbReference type="HGNC" id="HGNC:29109">
    <property type="gene designation" value="TESPA1"/>
</dbReference>
<dbReference type="HPA" id="ENSG00000135426">
    <property type="expression patterns" value="Group enriched (brain, lymphoid tissue)"/>
</dbReference>
<dbReference type="MIM" id="615664">
    <property type="type" value="gene"/>
</dbReference>
<dbReference type="neXtProt" id="NX_A2RU30"/>
<dbReference type="OpenTargets" id="ENSG00000135426"/>
<dbReference type="PharmGKB" id="PA128394561"/>
<dbReference type="VEuPathDB" id="HostDB:ENSG00000135426"/>
<dbReference type="eggNOG" id="ENOG502QWSR">
    <property type="taxonomic scope" value="Eukaryota"/>
</dbReference>
<dbReference type="GeneTree" id="ENSGT00940000160763"/>
<dbReference type="HOGENOM" id="CLU_040123_0_0_1"/>
<dbReference type="InParanoid" id="A2RU30"/>
<dbReference type="OMA" id="APCCTHS"/>
<dbReference type="OrthoDB" id="6088188at2759"/>
<dbReference type="PAN-GO" id="A2RU30">
    <property type="GO annotations" value="2 GO annotations based on evolutionary models"/>
</dbReference>
<dbReference type="PhylomeDB" id="A2RU30"/>
<dbReference type="TreeFam" id="TF331566"/>
<dbReference type="PathwayCommons" id="A2RU30"/>
<dbReference type="SignaLink" id="A2RU30"/>
<dbReference type="BioGRID-ORCS" id="9840">
    <property type="hits" value="11 hits in 1156 CRISPR screens"/>
</dbReference>
<dbReference type="ChiTaRS" id="TESPA1">
    <property type="organism name" value="human"/>
</dbReference>
<dbReference type="GenomeRNAi" id="9840"/>
<dbReference type="Pharos" id="A2RU30">
    <property type="development level" value="Tbio"/>
</dbReference>
<dbReference type="PRO" id="PR:A2RU30"/>
<dbReference type="Proteomes" id="UP000005640">
    <property type="component" value="Chromosome 12"/>
</dbReference>
<dbReference type="RNAct" id="A2RU30">
    <property type="molecule type" value="protein"/>
</dbReference>
<dbReference type="Bgee" id="ENSG00000135426">
    <property type="expression patterns" value="Expressed in prefrontal cortex and 119 other cell types or tissues"/>
</dbReference>
<dbReference type="ExpressionAtlas" id="A2RU30">
    <property type="expression patterns" value="baseline and differential"/>
</dbReference>
<dbReference type="GO" id="GO:0008180">
    <property type="term" value="C:COP9 signalosome"/>
    <property type="evidence" value="ECO:0000314"/>
    <property type="project" value="UniProtKB"/>
</dbReference>
<dbReference type="GO" id="GO:0005737">
    <property type="term" value="C:cytoplasm"/>
    <property type="evidence" value="ECO:0000250"/>
    <property type="project" value="UniProtKB"/>
</dbReference>
<dbReference type="GO" id="GO:0005829">
    <property type="term" value="C:cytosol"/>
    <property type="evidence" value="ECO:0000314"/>
    <property type="project" value="HPA"/>
</dbReference>
<dbReference type="GO" id="GO:0005789">
    <property type="term" value="C:endoplasmic reticulum membrane"/>
    <property type="evidence" value="ECO:0007669"/>
    <property type="project" value="UniProtKB-SubCell"/>
</dbReference>
<dbReference type="GO" id="GO:0036398">
    <property type="term" value="C:TCR signalosome"/>
    <property type="evidence" value="ECO:0007669"/>
    <property type="project" value="Ensembl"/>
</dbReference>
<dbReference type="GO" id="GO:0043274">
    <property type="term" value="F:phospholipase binding"/>
    <property type="evidence" value="ECO:0007669"/>
    <property type="project" value="Ensembl"/>
</dbReference>
<dbReference type="GO" id="GO:0005102">
    <property type="term" value="F:signaling receptor binding"/>
    <property type="evidence" value="ECO:0007669"/>
    <property type="project" value="InterPro"/>
</dbReference>
<dbReference type="GO" id="GO:0010387">
    <property type="term" value="P:COP9 signalosome assembly"/>
    <property type="evidence" value="ECO:0000250"/>
    <property type="project" value="UniProtKB"/>
</dbReference>
<dbReference type="GO" id="GO:0033089">
    <property type="term" value="P:positive regulation of T cell differentiation in thymus"/>
    <property type="evidence" value="ECO:0000250"/>
    <property type="project" value="UniProtKB"/>
</dbReference>
<dbReference type="GO" id="GO:0050862">
    <property type="term" value="P:positive regulation of T cell receptor signaling pathway"/>
    <property type="evidence" value="ECO:0000250"/>
    <property type="project" value="UniProtKB"/>
</dbReference>
<dbReference type="GO" id="GO:0008104">
    <property type="term" value="P:protein localization"/>
    <property type="evidence" value="ECO:0007669"/>
    <property type="project" value="Ensembl"/>
</dbReference>
<dbReference type="GO" id="GO:0033077">
    <property type="term" value="P:T cell differentiation in thymus"/>
    <property type="evidence" value="ECO:0007669"/>
    <property type="project" value="Ensembl"/>
</dbReference>
<dbReference type="GO" id="GO:0036399">
    <property type="term" value="P:TCR signalosome assembly"/>
    <property type="evidence" value="ECO:0007669"/>
    <property type="project" value="Ensembl"/>
</dbReference>
<dbReference type="InterPro" id="IPR029325">
    <property type="entry name" value="ITPR-bd"/>
</dbReference>
<dbReference type="InterPro" id="IPR043444">
    <property type="entry name" value="TESPA1-like"/>
</dbReference>
<dbReference type="PANTHER" id="PTHR17469:SF1">
    <property type="entry name" value="PROTEIN TESPA1"/>
    <property type="match status" value="1"/>
</dbReference>
<dbReference type="PANTHER" id="PTHR17469">
    <property type="entry name" value="SPERM SPECIFIC ANTIGEN 2-RELATED"/>
    <property type="match status" value="1"/>
</dbReference>
<dbReference type="Pfam" id="PF14722">
    <property type="entry name" value="KRAP_IP3R_bind"/>
    <property type="match status" value="1"/>
</dbReference>
<dbReference type="SMART" id="SM01257">
    <property type="entry name" value="KRAP_IP3R_bind"/>
    <property type="match status" value="1"/>
</dbReference>
<feature type="chain" id="PRO_0000315219" description="Protein TESPA1">
    <location>
        <begin position="1"/>
        <end position="521"/>
    </location>
</feature>
<feature type="region of interest" description="Disordered" evidence="2">
    <location>
        <begin position="331"/>
        <end position="351"/>
    </location>
</feature>
<feature type="region of interest" description="Disordered" evidence="2">
    <location>
        <begin position="461"/>
        <end position="521"/>
    </location>
</feature>
<feature type="compositionally biased region" description="Polar residues" evidence="2">
    <location>
        <begin position="331"/>
        <end position="341"/>
    </location>
</feature>
<feature type="compositionally biased region" description="Basic and acidic residues" evidence="2">
    <location>
        <begin position="466"/>
        <end position="475"/>
    </location>
</feature>
<feature type="compositionally biased region" description="Acidic residues" evidence="2">
    <location>
        <begin position="485"/>
        <end position="498"/>
    </location>
</feature>
<feature type="compositionally biased region" description="Basic residues" evidence="2">
    <location>
        <begin position="505"/>
        <end position="514"/>
    </location>
</feature>
<feature type="modified residue" description="Phosphoserine" evidence="11">
    <location>
        <position position="311"/>
    </location>
</feature>
<feature type="splice variant" id="VSP_030488" description="In isoform 2 and isoform 3." evidence="7 8 9">
    <location>
        <begin position="1"/>
        <end position="138"/>
    </location>
</feature>
<feature type="splice variant" id="VSP_030489" description="In isoform 3." evidence="8">
    <original>DS</original>
    <variation>FVKLSPPPQQHVV</variation>
    <location>
        <begin position="520"/>
        <end position="521"/>
    </location>
</feature>
<feature type="sequence variant" id="VAR_049513" description="In dbSNP:rs997173." evidence="6">
    <original>E</original>
    <variation>K</variation>
    <location>
        <position position="496"/>
    </location>
</feature>
<feature type="mutagenesis site" description="Loss of ITPR1-binding." evidence="5">
    <original>F</original>
    <variation>A</variation>
    <location>
        <position position="185"/>
    </location>
</feature>
<feature type="mutagenesis site" description="Strong decrease in ITPR1-binding. Complete loss of ITPR1-binding; when associated with A-185." evidence="5">
    <original>F</original>
    <variation>A</variation>
    <location>
        <position position="186"/>
    </location>
</feature>
<feature type="sequence conflict" description="In Ref. 7; AAH44578." evidence="10" ref="7">
    <original>R</original>
    <variation>Q</variation>
    <location>
        <position position="475"/>
    </location>
</feature>
<name>TESP1_HUMAN</name>
<protein>
    <recommendedName>
        <fullName>Protein TESPA1</fullName>
    </recommendedName>
    <alternativeName>
        <fullName>Thymocyte-expressed positive selection-associated protein 1</fullName>
    </alternativeName>
</protein>
<evidence type="ECO:0000250" key="1"/>
<evidence type="ECO:0000256" key="2">
    <source>
        <dbReference type="SAM" id="MobiDB-lite"/>
    </source>
</evidence>
<evidence type="ECO:0000269" key="3">
    <source>
    </source>
</evidence>
<evidence type="ECO:0000269" key="4">
    <source>
    </source>
</evidence>
<evidence type="ECO:0000269" key="5">
    <source>
    </source>
</evidence>
<evidence type="ECO:0000269" key="6">
    <source ref="8"/>
</evidence>
<evidence type="ECO:0000303" key="7">
    <source>
    </source>
</evidence>
<evidence type="ECO:0000303" key="8">
    <source>
    </source>
</evidence>
<evidence type="ECO:0000303" key="9">
    <source>
    </source>
</evidence>
<evidence type="ECO:0000305" key="10"/>
<evidence type="ECO:0007744" key="11">
    <source>
    </source>
</evidence>
<gene>
    <name type="primary">TESPA1</name>
    <name type="synonym">KIAA0748</name>
    <name type="ORF">HSPC257</name>
</gene>
<keyword id="KW-0025">Alternative splicing</keyword>
<keyword id="KW-0963">Cytoplasm</keyword>
<keyword id="KW-0256">Endoplasmic reticulum</keyword>
<keyword id="KW-0472">Membrane</keyword>
<keyword id="KW-0597">Phosphoprotein</keyword>
<keyword id="KW-1267">Proteomics identification</keyword>
<keyword id="KW-1185">Reference proteome</keyword>
<keyword id="KW-0736">Signalosome</keyword>
<proteinExistence type="evidence at protein level"/>
<organism>
    <name type="scientific">Homo sapiens</name>
    <name type="common">Human</name>
    <dbReference type="NCBI Taxonomy" id="9606"/>
    <lineage>
        <taxon>Eukaryota</taxon>
        <taxon>Metazoa</taxon>
        <taxon>Chordata</taxon>
        <taxon>Craniata</taxon>
        <taxon>Vertebrata</taxon>
        <taxon>Euteleostomi</taxon>
        <taxon>Mammalia</taxon>
        <taxon>Eutheria</taxon>
        <taxon>Euarchontoglires</taxon>
        <taxon>Primates</taxon>
        <taxon>Haplorrhini</taxon>
        <taxon>Catarrhini</taxon>
        <taxon>Hominidae</taxon>
        <taxon>Homo</taxon>
    </lineage>
</organism>
<accession>A2RU30</accession>
<accession>B4DPM3</accession>
<accession>B4E048</accession>
<accession>B7Z9K7</accession>
<accession>O94849</accession>
<accession>Q4G0P2</accession>
<accession>Q9P0C4</accession>
<sequence>MEASVLSPTSWEKRRAWLRQSRNWQTQVLEEEAAAALQDVPDPEPSSLDDVFQEGNPINKIEDWLQDCGYSEEGFSEEAGQFIYNGFCSHGTSFEDDLTLGAEATLLAANGKLFSRSFLETARPCQLLDLGCSLASSSMTGGTNKTSSSISEILDKVQEDAEDVLFSLGFGQEDHKDTSRIPARFFTTPSQAKGIDFQLFLKSQVRRIEMEDPCLMLASRFKQVQTLAVTADAFFCLYSYVSKTPVQKFTPSHMFWNCNHPTDVPSIRILSREPEPQSPRDRLRKAISKMCLYTCPRDRPPPPHNTPKRNSLDQVVLEVMDKVKEEKQFLQQDSDLGQFSQEDPVPPAEGKKLPTSPYPCVFCCEEETQQRMSTVLAPSQTLDSNPKVPCCTHSLPIEDPQWSTDPAQIRRELCSLPATNTETHPAKDETFWKRKSRARKSLFQKNLMGRKVKSLDLSITQQKWKQSVDRPELRRSLSQQPQDTFDLEEVQSNSEEEQSQSRWPSRPRHPHHHQTFAGKDS</sequence>
<reference key="1">
    <citation type="journal article" date="2012" name="Nat. Immunol.">
        <title>Tespa1 is involved in late thymocyte development through the regulation of TCR-mediated signaling.</title>
        <authorList>
            <person name="Wang D."/>
            <person name="Zheng M."/>
            <person name="Lei L."/>
            <person name="Ji J."/>
            <person name="Yao Y."/>
            <person name="Qiu Y."/>
            <person name="Ma L."/>
            <person name="Lou J."/>
            <person name="Ouyang C."/>
            <person name="Zhang X."/>
            <person name="He Y."/>
            <person name="Chi J."/>
            <person name="Wang L."/>
            <person name="Kuang Y."/>
            <person name="Wang J."/>
            <person name="Cao X."/>
            <person name="Lu L."/>
        </authorList>
    </citation>
    <scope>NUCLEOTIDE SEQUENCE [MRNA] (ISOFORM 1)</scope>
    <scope>FUNCTION</scope>
    <scope>SUBCELLULAR LOCATION</scope>
    <scope>INTERACTION WITH PLCG1 AND GRB2</scope>
    <source>
        <tissue>T-cell</tissue>
    </source>
</reference>
<reference key="2">
    <citation type="journal article" date="1998" name="DNA Res.">
        <title>Prediction of the coding sequences of unidentified human genes. XI. The complete sequences of 100 new cDNA clones from brain which code for large proteins in vitro.</title>
        <authorList>
            <person name="Nagase T."/>
            <person name="Ishikawa K."/>
            <person name="Suyama M."/>
            <person name="Kikuno R."/>
            <person name="Miyajima N."/>
            <person name="Tanaka A."/>
            <person name="Kotani H."/>
            <person name="Nomura N."/>
            <person name="Ohara O."/>
        </authorList>
    </citation>
    <scope>NUCLEOTIDE SEQUENCE [LARGE SCALE MRNA] (ISOFORM 2)</scope>
    <source>
        <tissue>Brain</tissue>
    </source>
</reference>
<reference key="3">
    <citation type="submission" date="2004-01" db="EMBL/GenBank/DDBJ databases">
        <authorList>
            <person name="Ohara O."/>
            <person name="Suyama M."/>
            <person name="Nagase T."/>
            <person name="Ishikawa K."/>
            <person name="Kikuno R."/>
        </authorList>
    </citation>
    <scope>SEQUENCE REVISION</scope>
</reference>
<reference key="4">
    <citation type="journal article" date="2004" name="Nat. Genet.">
        <title>Complete sequencing and characterization of 21,243 full-length human cDNAs.</title>
        <authorList>
            <person name="Ota T."/>
            <person name="Suzuki Y."/>
            <person name="Nishikawa T."/>
            <person name="Otsuki T."/>
            <person name="Sugiyama T."/>
            <person name="Irie R."/>
            <person name="Wakamatsu A."/>
            <person name="Hayashi K."/>
            <person name="Sato H."/>
            <person name="Nagai K."/>
            <person name="Kimura K."/>
            <person name="Makita H."/>
            <person name="Sekine M."/>
            <person name="Obayashi M."/>
            <person name="Nishi T."/>
            <person name="Shibahara T."/>
            <person name="Tanaka T."/>
            <person name="Ishii S."/>
            <person name="Yamamoto J."/>
            <person name="Saito K."/>
            <person name="Kawai Y."/>
            <person name="Isono Y."/>
            <person name="Nakamura Y."/>
            <person name="Nagahari K."/>
            <person name="Murakami K."/>
            <person name="Yasuda T."/>
            <person name="Iwayanagi T."/>
            <person name="Wagatsuma M."/>
            <person name="Shiratori A."/>
            <person name="Sudo H."/>
            <person name="Hosoiri T."/>
            <person name="Kaku Y."/>
            <person name="Kodaira H."/>
            <person name="Kondo H."/>
            <person name="Sugawara M."/>
            <person name="Takahashi M."/>
            <person name="Kanda K."/>
            <person name="Yokoi T."/>
            <person name="Furuya T."/>
            <person name="Kikkawa E."/>
            <person name="Omura Y."/>
            <person name="Abe K."/>
            <person name="Kamihara K."/>
            <person name="Katsuta N."/>
            <person name="Sato K."/>
            <person name="Tanikawa M."/>
            <person name="Yamazaki M."/>
            <person name="Ninomiya K."/>
            <person name="Ishibashi T."/>
            <person name="Yamashita H."/>
            <person name="Murakawa K."/>
            <person name="Fujimori K."/>
            <person name="Tanai H."/>
            <person name="Kimata M."/>
            <person name="Watanabe M."/>
            <person name="Hiraoka S."/>
            <person name="Chiba Y."/>
            <person name="Ishida S."/>
            <person name="Ono Y."/>
            <person name="Takiguchi S."/>
            <person name="Watanabe S."/>
            <person name="Yosida M."/>
            <person name="Hotuta T."/>
            <person name="Kusano J."/>
            <person name="Kanehori K."/>
            <person name="Takahashi-Fujii A."/>
            <person name="Hara H."/>
            <person name="Tanase T.-O."/>
            <person name="Nomura Y."/>
            <person name="Togiya S."/>
            <person name="Komai F."/>
            <person name="Hara R."/>
            <person name="Takeuchi K."/>
            <person name="Arita M."/>
            <person name="Imose N."/>
            <person name="Musashino K."/>
            <person name="Yuuki H."/>
            <person name="Oshima A."/>
            <person name="Sasaki N."/>
            <person name="Aotsuka S."/>
            <person name="Yoshikawa Y."/>
            <person name="Matsunawa H."/>
            <person name="Ichihara T."/>
            <person name="Shiohata N."/>
            <person name="Sano S."/>
            <person name="Moriya S."/>
            <person name="Momiyama H."/>
            <person name="Satoh N."/>
            <person name="Takami S."/>
            <person name="Terashima Y."/>
            <person name="Suzuki O."/>
            <person name="Nakagawa S."/>
            <person name="Senoh A."/>
            <person name="Mizoguchi H."/>
            <person name="Goto Y."/>
            <person name="Shimizu F."/>
            <person name="Wakebe H."/>
            <person name="Hishigaki H."/>
            <person name="Watanabe T."/>
            <person name="Sugiyama A."/>
            <person name="Takemoto M."/>
            <person name="Kawakami B."/>
            <person name="Yamazaki M."/>
            <person name="Watanabe K."/>
            <person name="Kumagai A."/>
            <person name="Itakura S."/>
            <person name="Fukuzumi Y."/>
            <person name="Fujimori Y."/>
            <person name="Komiyama M."/>
            <person name="Tashiro H."/>
            <person name="Tanigami A."/>
            <person name="Fujiwara T."/>
            <person name="Ono T."/>
            <person name="Yamada K."/>
            <person name="Fujii Y."/>
            <person name="Ozaki K."/>
            <person name="Hirao M."/>
            <person name="Ohmori Y."/>
            <person name="Kawabata A."/>
            <person name="Hikiji T."/>
            <person name="Kobatake N."/>
            <person name="Inagaki H."/>
            <person name="Ikema Y."/>
            <person name="Okamoto S."/>
            <person name="Okitani R."/>
            <person name="Kawakami T."/>
            <person name="Noguchi S."/>
            <person name="Itoh T."/>
            <person name="Shigeta K."/>
            <person name="Senba T."/>
            <person name="Matsumura K."/>
            <person name="Nakajima Y."/>
            <person name="Mizuno T."/>
            <person name="Morinaga M."/>
            <person name="Sasaki M."/>
            <person name="Togashi T."/>
            <person name="Oyama M."/>
            <person name="Hata H."/>
            <person name="Watanabe M."/>
            <person name="Komatsu T."/>
            <person name="Mizushima-Sugano J."/>
            <person name="Satoh T."/>
            <person name="Shirai Y."/>
            <person name="Takahashi Y."/>
            <person name="Nakagawa K."/>
            <person name="Okumura K."/>
            <person name="Nagase T."/>
            <person name="Nomura N."/>
            <person name="Kikuchi H."/>
            <person name="Masuho Y."/>
            <person name="Yamashita R."/>
            <person name="Nakai K."/>
            <person name="Yada T."/>
            <person name="Nakamura Y."/>
            <person name="Ohara O."/>
            <person name="Isogai T."/>
            <person name="Sugano S."/>
        </authorList>
    </citation>
    <scope>NUCLEOTIDE SEQUENCE [LARGE SCALE MRNA] (ISOFORMS 1 AND 2)</scope>
    <source>
        <tissue>Amygdala</tissue>
        <tissue>Liver</tissue>
        <tissue>Thymus</tissue>
    </source>
</reference>
<reference key="5">
    <citation type="journal article" date="2006" name="Nature">
        <title>The finished DNA sequence of human chromosome 12.</title>
        <authorList>
            <person name="Scherer S.E."/>
            <person name="Muzny D.M."/>
            <person name="Buhay C.J."/>
            <person name="Chen R."/>
            <person name="Cree A."/>
            <person name="Ding Y."/>
            <person name="Dugan-Rocha S."/>
            <person name="Gill R."/>
            <person name="Gunaratne P."/>
            <person name="Harris R.A."/>
            <person name="Hawes A.C."/>
            <person name="Hernandez J."/>
            <person name="Hodgson A.V."/>
            <person name="Hume J."/>
            <person name="Jackson A."/>
            <person name="Khan Z.M."/>
            <person name="Kovar-Smith C."/>
            <person name="Lewis L.R."/>
            <person name="Lozado R.J."/>
            <person name="Metzker M.L."/>
            <person name="Milosavljevic A."/>
            <person name="Miner G.R."/>
            <person name="Montgomery K.T."/>
            <person name="Morgan M.B."/>
            <person name="Nazareth L.V."/>
            <person name="Scott G."/>
            <person name="Sodergren E."/>
            <person name="Song X.-Z."/>
            <person name="Steffen D."/>
            <person name="Lovering R.C."/>
            <person name="Wheeler D.A."/>
            <person name="Worley K.C."/>
            <person name="Yuan Y."/>
            <person name="Zhang Z."/>
            <person name="Adams C.Q."/>
            <person name="Ansari-Lari M.A."/>
            <person name="Ayele M."/>
            <person name="Brown M.J."/>
            <person name="Chen G."/>
            <person name="Chen Z."/>
            <person name="Clerc-Blankenburg K.P."/>
            <person name="Davis C."/>
            <person name="Delgado O."/>
            <person name="Dinh H.H."/>
            <person name="Draper H."/>
            <person name="Gonzalez-Garay M.L."/>
            <person name="Havlak P."/>
            <person name="Jackson L.R."/>
            <person name="Jacob L.S."/>
            <person name="Kelly S.H."/>
            <person name="Li L."/>
            <person name="Li Z."/>
            <person name="Liu J."/>
            <person name="Liu W."/>
            <person name="Lu J."/>
            <person name="Maheshwari M."/>
            <person name="Nguyen B.-V."/>
            <person name="Okwuonu G.O."/>
            <person name="Pasternak S."/>
            <person name="Perez L.M."/>
            <person name="Plopper F.J.H."/>
            <person name="Santibanez J."/>
            <person name="Shen H."/>
            <person name="Tabor P.E."/>
            <person name="Verduzco D."/>
            <person name="Waldron L."/>
            <person name="Wang Q."/>
            <person name="Williams G.A."/>
            <person name="Zhang J."/>
            <person name="Zhou J."/>
            <person name="Allen C.C."/>
            <person name="Amin A.G."/>
            <person name="Anyalebechi V."/>
            <person name="Bailey M."/>
            <person name="Barbaria J.A."/>
            <person name="Bimage K.E."/>
            <person name="Bryant N.P."/>
            <person name="Burch P.E."/>
            <person name="Burkett C.E."/>
            <person name="Burrell K.L."/>
            <person name="Calderon E."/>
            <person name="Cardenas V."/>
            <person name="Carter K."/>
            <person name="Casias K."/>
            <person name="Cavazos I."/>
            <person name="Cavazos S.R."/>
            <person name="Ceasar H."/>
            <person name="Chacko J."/>
            <person name="Chan S.N."/>
            <person name="Chavez D."/>
            <person name="Christopoulos C."/>
            <person name="Chu J."/>
            <person name="Cockrell R."/>
            <person name="Cox C.D."/>
            <person name="Dang M."/>
            <person name="Dathorne S.R."/>
            <person name="David R."/>
            <person name="Davis C.M."/>
            <person name="Davy-Carroll L."/>
            <person name="Deshazo D.R."/>
            <person name="Donlin J.E."/>
            <person name="D'Souza L."/>
            <person name="Eaves K.A."/>
            <person name="Egan A."/>
            <person name="Emery-Cohen A.J."/>
            <person name="Escotto M."/>
            <person name="Flagg N."/>
            <person name="Forbes L.D."/>
            <person name="Gabisi A.M."/>
            <person name="Garza M."/>
            <person name="Hamilton C."/>
            <person name="Henderson N."/>
            <person name="Hernandez O."/>
            <person name="Hines S."/>
            <person name="Hogues M.E."/>
            <person name="Huang M."/>
            <person name="Idlebird D.G."/>
            <person name="Johnson R."/>
            <person name="Jolivet A."/>
            <person name="Jones S."/>
            <person name="Kagan R."/>
            <person name="King L.M."/>
            <person name="Leal B."/>
            <person name="Lebow H."/>
            <person name="Lee S."/>
            <person name="LeVan J.M."/>
            <person name="Lewis L.C."/>
            <person name="London P."/>
            <person name="Lorensuhewa L.M."/>
            <person name="Loulseged H."/>
            <person name="Lovett D.A."/>
            <person name="Lucier A."/>
            <person name="Lucier R.L."/>
            <person name="Ma J."/>
            <person name="Madu R.C."/>
            <person name="Mapua P."/>
            <person name="Martindale A.D."/>
            <person name="Martinez E."/>
            <person name="Massey E."/>
            <person name="Mawhiney S."/>
            <person name="Meador M.G."/>
            <person name="Mendez S."/>
            <person name="Mercado C."/>
            <person name="Mercado I.C."/>
            <person name="Merritt C.E."/>
            <person name="Miner Z.L."/>
            <person name="Minja E."/>
            <person name="Mitchell T."/>
            <person name="Mohabbat F."/>
            <person name="Mohabbat K."/>
            <person name="Montgomery B."/>
            <person name="Moore N."/>
            <person name="Morris S."/>
            <person name="Munidasa M."/>
            <person name="Ngo R.N."/>
            <person name="Nguyen N.B."/>
            <person name="Nickerson E."/>
            <person name="Nwaokelemeh O.O."/>
            <person name="Nwokenkwo S."/>
            <person name="Obregon M."/>
            <person name="Oguh M."/>
            <person name="Oragunye N."/>
            <person name="Oviedo R.J."/>
            <person name="Parish B.J."/>
            <person name="Parker D.N."/>
            <person name="Parrish J."/>
            <person name="Parks K.L."/>
            <person name="Paul H.A."/>
            <person name="Payton B.A."/>
            <person name="Perez A."/>
            <person name="Perrin W."/>
            <person name="Pickens A."/>
            <person name="Primus E.L."/>
            <person name="Pu L.-L."/>
            <person name="Puazo M."/>
            <person name="Quiles M.M."/>
            <person name="Quiroz J.B."/>
            <person name="Rabata D."/>
            <person name="Reeves K."/>
            <person name="Ruiz S.J."/>
            <person name="Shao H."/>
            <person name="Sisson I."/>
            <person name="Sonaike T."/>
            <person name="Sorelle R.P."/>
            <person name="Sutton A.E."/>
            <person name="Svatek A.F."/>
            <person name="Svetz L.A."/>
            <person name="Tamerisa K.S."/>
            <person name="Taylor T.R."/>
            <person name="Teague B."/>
            <person name="Thomas N."/>
            <person name="Thorn R.D."/>
            <person name="Trejos Z.Y."/>
            <person name="Trevino B.K."/>
            <person name="Ukegbu O.N."/>
            <person name="Urban J.B."/>
            <person name="Vasquez L.I."/>
            <person name="Vera V.A."/>
            <person name="Villasana D.M."/>
            <person name="Wang L."/>
            <person name="Ward-Moore S."/>
            <person name="Warren J.T."/>
            <person name="Wei X."/>
            <person name="White F."/>
            <person name="Williamson A.L."/>
            <person name="Wleczyk R."/>
            <person name="Wooden H.S."/>
            <person name="Wooden S.H."/>
            <person name="Yen J."/>
            <person name="Yoon L."/>
            <person name="Yoon V."/>
            <person name="Zorrilla S.E."/>
            <person name="Nelson D."/>
            <person name="Kucherlapati R."/>
            <person name="Weinstock G."/>
            <person name="Gibbs R.A."/>
        </authorList>
    </citation>
    <scope>NUCLEOTIDE SEQUENCE [LARGE SCALE GENOMIC DNA]</scope>
</reference>
<reference key="6">
    <citation type="submission" date="2005-07" db="EMBL/GenBank/DDBJ databases">
        <authorList>
            <person name="Mural R.J."/>
            <person name="Istrail S."/>
            <person name="Sutton G.G."/>
            <person name="Florea L."/>
            <person name="Halpern A.L."/>
            <person name="Mobarry C.M."/>
            <person name="Lippert R."/>
            <person name="Walenz B."/>
            <person name="Shatkay H."/>
            <person name="Dew I."/>
            <person name="Miller J.R."/>
            <person name="Flanigan M.J."/>
            <person name="Edwards N.J."/>
            <person name="Bolanos R."/>
            <person name="Fasulo D."/>
            <person name="Halldorsson B.V."/>
            <person name="Hannenhalli S."/>
            <person name="Turner R."/>
            <person name="Yooseph S."/>
            <person name="Lu F."/>
            <person name="Nusskern D.R."/>
            <person name="Shue B.C."/>
            <person name="Zheng X.H."/>
            <person name="Zhong F."/>
            <person name="Delcher A.L."/>
            <person name="Huson D.H."/>
            <person name="Kravitz S.A."/>
            <person name="Mouchard L."/>
            <person name="Reinert K."/>
            <person name="Remington K.A."/>
            <person name="Clark A.G."/>
            <person name="Waterman M.S."/>
            <person name="Eichler E.E."/>
            <person name="Adams M.D."/>
            <person name="Hunkapiller M.W."/>
            <person name="Myers E.W."/>
            <person name="Venter J.C."/>
        </authorList>
    </citation>
    <scope>NUCLEOTIDE SEQUENCE [LARGE SCALE GENOMIC DNA]</scope>
</reference>
<reference key="7">
    <citation type="journal article" date="2004" name="Genome Res.">
        <title>The status, quality, and expansion of the NIH full-length cDNA project: the Mammalian Gene Collection (MGC).</title>
        <authorList>
            <consortium name="The MGC Project Team"/>
        </authorList>
    </citation>
    <scope>NUCLEOTIDE SEQUENCE [LARGE SCALE MRNA] (ISOFORMS 1 AND 3)</scope>
    <source>
        <tissue>Brain</tissue>
    </source>
</reference>
<reference key="8">
    <citation type="submission" date="1999-05" db="EMBL/GenBank/DDBJ databases">
        <title>Human partial CDS from CD34+ stem cells.</title>
        <authorList>
            <person name="Ye M."/>
            <person name="Zhang Q.-H."/>
            <person name="Zhou J."/>
            <person name="Shen Y."/>
            <person name="Wu X.-Y."/>
            <person name="Guan Z.Q."/>
            <person name="Wang L."/>
            <person name="Fan H.-Y."/>
            <person name="Mao Y.-F."/>
            <person name="Dai M."/>
            <person name="Huang Q.-H."/>
            <person name="Chen S.-J."/>
            <person name="Chen Z."/>
        </authorList>
    </citation>
    <scope>NUCLEOTIDE SEQUENCE [LARGE SCALE MRNA] OF 349-521</scope>
    <scope>VARIANT LYS-496</scope>
    <source>
        <tissue>Umbilical cord blood</tissue>
    </source>
</reference>
<reference key="9">
    <citation type="journal article" date="2009" name="Sci. Signal.">
        <title>Quantitative phosphoproteomic analysis of T cell receptor signaling reveals system-wide modulation of protein-protein interactions.</title>
        <authorList>
            <person name="Mayya V."/>
            <person name="Lundgren D.H."/>
            <person name="Hwang S.-I."/>
            <person name="Rezaul K."/>
            <person name="Wu L."/>
            <person name="Eng J.K."/>
            <person name="Rodionov V."/>
            <person name="Han D.K."/>
        </authorList>
    </citation>
    <scope>PHOSPHORYLATION [LARGE SCALE ANALYSIS] AT SER-311</scope>
    <scope>IDENTIFICATION BY MASS SPECTROMETRY [LARGE SCALE ANALYSIS]</scope>
    <source>
        <tissue>Leukemic T-cell</tissue>
    </source>
</reference>
<reference key="10">
    <citation type="journal article" date="2012" name="FEBS Open Bio">
        <title>Tespa1 is a novel inositol 1,4,5-trisphosphate receptor binding protein in T and B lymphocytes.</title>
        <authorList>
            <person name="Matsuzaki H."/>
            <person name="Fujimoto T."/>
            <person name="Ota T."/>
            <person name="Ogawa M."/>
            <person name="Tsunoda T."/>
            <person name="Doi K."/>
            <person name="Hamabashiri M."/>
            <person name="Tanaka M."/>
            <person name="Shirasawa S."/>
        </authorList>
    </citation>
    <scope>INTERACTION WITH ITPR1</scope>
    <scope>MUTAGENESIS OF PHE-185 AND PHE-186</scope>
</reference>
<reference key="11">
    <citation type="journal article" date="2013" name="Biochem. Biophys. Res. Commun.">
        <title>Tespa1 is a novel component of mitochondria-associated endoplasmic reticulum membranes and affects mitochondrial calcium flux.</title>
        <authorList>
            <person name="Matsuzaki H."/>
            <person name="Fujimoto T."/>
            <person name="Tanaka M."/>
            <person name="Shirasawa S."/>
        </authorList>
    </citation>
    <scope>INTERACTION WITH HSPA9</scope>
    <scope>SUBCELLULAR LOCATION</scope>
</reference>